<evidence type="ECO:0000255" key="1">
    <source>
        <dbReference type="HAMAP-Rule" id="MF_00251"/>
    </source>
</evidence>
<evidence type="ECO:0000305" key="2"/>
<dbReference type="EMBL" id="CP001283">
    <property type="protein sequence ID" value="ACK91518.1"/>
    <property type="molecule type" value="Genomic_DNA"/>
</dbReference>
<dbReference type="RefSeq" id="WP_000868344.1">
    <property type="nucleotide sequence ID" value="NC_011773.1"/>
</dbReference>
<dbReference type="SMR" id="B7JKE4"/>
<dbReference type="GeneID" id="97822099"/>
<dbReference type="KEGG" id="bcu:BCAH820_0147"/>
<dbReference type="HOGENOM" id="CLU_135723_6_2_9"/>
<dbReference type="Proteomes" id="UP000001363">
    <property type="component" value="Chromosome"/>
</dbReference>
<dbReference type="GO" id="GO:0005737">
    <property type="term" value="C:cytoplasm"/>
    <property type="evidence" value="ECO:0007669"/>
    <property type="project" value="UniProtKB-ARBA"/>
</dbReference>
<dbReference type="GO" id="GO:1990904">
    <property type="term" value="C:ribonucleoprotein complex"/>
    <property type="evidence" value="ECO:0007669"/>
    <property type="project" value="UniProtKB-KW"/>
</dbReference>
<dbReference type="GO" id="GO:0005840">
    <property type="term" value="C:ribosome"/>
    <property type="evidence" value="ECO:0007669"/>
    <property type="project" value="UniProtKB-KW"/>
</dbReference>
<dbReference type="GO" id="GO:0003735">
    <property type="term" value="F:structural constituent of ribosome"/>
    <property type="evidence" value="ECO:0007669"/>
    <property type="project" value="InterPro"/>
</dbReference>
<dbReference type="GO" id="GO:0006412">
    <property type="term" value="P:translation"/>
    <property type="evidence" value="ECO:0007669"/>
    <property type="project" value="UniProtKB-UniRule"/>
</dbReference>
<dbReference type="HAMAP" id="MF_00251">
    <property type="entry name" value="Ribosomal_bL36"/>
    <property type="match status" value="1"/>
</dbReference>
<dbReference type="InterPro" id="IPR000473">
    <property type="entry name" value="Ribosomal_bL36"/>
</dbReference>
<dbReference type="InterPro" id="IPR035977">
    <property type="entry name" value="Ribosomal_bL36_sp"/>
</dbReference>
<dbReference type="NCBIfam" id="TIGR01022">
    <property type="entry name" value="rpmJ_bact"/>
    <property type="match status" value="1"/>
</dbReference>
<dbReference type="PANTHER" id="PTHR42888">
    <property type="entry name" value="50S RIBOSOMAL PROTEIN L36, CHLOROPLASTIC"/>
    <property type="match status" value="1"/>
</dbReference>
<dbReference type="PANTHER" id="PTHR42888:SF1">
    <property type="entry name" value="LARGE RIBOSOMAL SUBUNIT PROTEIN BL36C"/>
    <property type="match status" value="1"/>
</dbReference>
<dbReference type="Pfam" id="PF00444">
    <property type="entry name" value="Ribosomal_L36"/>
    <property type="match status" value="1"/>
</dbReference>
<dbReference type="SUPFAM" id="SSF57840">
    <property type="entry name" value="Ribosomal protein L36"/>
    <property type="match status" value="1"/>
</dbReference>
<dbReference type="PROSITE" id="PS00828">
    <property type="entry name" value="RIBOSOMAL_L36"/>
    <property type="match status" value="1"/>
</dbReference>
<protein>
    <recommendedName>
        <fullName evidence="1">Large ribosomal subunit protein bL36</fullName>
    </recommendedName>
    <alternativeName>
        <fullName evidence="2">50S ribosomal protein L36</fullName>
    </alternativeName>
</protein>
<gene>
    <name evidence="1" type="primary">rpmJ</name>
    <name type="ordered locus">BCAH820_0147</name>
</gene>
<comment type="similarity">
    <text evidence="1">Belongs to the bacterial ribosomal protein bL36 family.</text>
</comment>
<organism>
    <name type="scientific">Bacillus cereus (strain AH820)</name>
    <dbReference type="NCBI Taxonomy" id="405535"/>
    <lineage>
        <taxon>Bacteria</taxon>
        <taxon>Bacillati</taxon>
        <taxon>Bacillota</taxon>
        <taxon>Bacilli</taxon>
        <taxon>Bacillales</taxon>
        <taxon>Bacillaceae</taxon>
        <taxon>Bacillus</taxon>
        <taxon>Bacillus cereus group</taxon>
    </lineage>
</organism>
<keyword id="KW-0687">Ribonucleoprotein</keyword>
<keyword id="KW-0689">Ribosomal protein</keyword>
<name>RL36_BACC0</name>
<proteinExistence type="inferred from homology"/>
<accession>B7JKE4</accession>
<sequence>MKVRPSVKPICEKCKVIRRRGKVMVICENPKHKQKQG</sequence>
<reference key="1">
    <citation type="submission" date="2008-10" db="EMBL/GenBank/DDBJ databases">
        <title>Genome sequence of Bacillus cereus AH820.</title>
        <authorList>
            <person name="Dodson R.J."/>
            <person name="Durkin A.S."/>
            <person name="Rosovitz M.J."/>
            <person name="Rasko D.A."/>
            <person name="Hoffmaster A."/>
            <person name="Ravel J."/>
            <person name="Sutton G."/>
        </authorList>
    </citation>
    <scope>NUCLEOTIDE SEQUENCE [LARGE SCALE GENOMIC DNA]</scope>
    <source>
        <strain>AH820</strain>
    </source>
</reference>
<feature type="chain" id="PRO_1000196165" description="Large ribosomal subunit protein bL36">
    <location>
        <begin position="1"/>
        <end position="37"/>
    </location>
</feature>